<protein>
    <recommendedName>
        <fullName>RNA-binding protein 3</fullName>
    </recommendedName>
    <alternativeName>
        <fullName>RNA-binding motif protein 3</fullName>
    </alternativeName>
    <alternativeName>
        <fullName>RNPL</fullName>
    </alternativeName>
</protein>
<feature type="chain" id="PRO_0000081752" description="RNA-binding protein 3">
    <location>
        <begin position="1"/>
        <end position="157"/>
    </location>
</feature>
<feature type="domain" description="RRM" evidence="3">
    <location>
        <begin position="6"/>
        <end position="84"/>
    </location>
</feature>
<feature type="region of interest" description="Disordered" evidence="4">
    <location>
        <begin position="81"/>
        <end position="157"/>
    </location>
</feature>
<feature type="compositionally biased region" description="Gly residues" evidence="4">
    <location>
        <begin position="105"/>
        <end position="114"/>
    </location>
</feature>
<feature type="modified residue" description="Omega-N-methylarginine" evidence="10">
    <location>
        <position position="47"/>
    </location>
</feature>
<feature type="modified residue" description="Asymmetric dimethylarginine; alternate" evidence="2">
    <location>
        <position position="105"/>
    </location>
</feature>
<feature type="modified residue" description="Dimethylated arginine; in A2780 ovarian carcinoma cell line" evidence="6">
    <location>
        <position position="105"/>
    </location>
</feature>
<feature type="modified residue" description="Omega-N-methylarginine; alternate" evidence="10">
    <location>
        <position position="105"/>
    </location>
</feature>
<feature type="modified residue" description="Omega-N-methylarginine" evidence="10">
    <location>
        <position position="121"/>
    </location>
</feature>
<feature type="modified residue" description="Omega-N-methylarginine" evidence="10">
    <location>
        <position position="131"/>
    </location>
</feature>
<feature type="modified residue" description="Phosphoserine" evidence="8 9">
    <location>
        <position position="147"/>
    </location>
</feature>
<feature type="modified residue" description="Phosphotyrosine" evidence="7">
    <location>
        <position position="155"/>
    </location>
</feature>
<feature type="strand" evidence="11">
    <location>
        <begin position="8"/>
        <end position="12"/>
    </location>
</feature>
<feature type="helix" evidence="11">
    <location>
        <begin position="19"/>
        <end position="29"/>
    </location>
</feature>
<feature type="strand" evidence="11">
    <location>
        <begin position="32"/>
        <end position="39"/>
    </location>
</feature>
<feature type="turn" evidence="11">
    <location>
        <begin position="41"/>
        <end position="43"/>
    </location>
</feature>
<feature type="strand" evidence="11">
    <location>
        <begin position="46"/>
        <end position="56"/>
    </location>
</feature>
<feature type="helix" evidence="11">
    <location>
        <begin position="57"/>
        <end position="67"/>
    </location>
</feature>
<feature type="strand" evidence="11">
    <location>
        <begin position="70"/>
        <end position="72"/>
    </location>
</feature>
<feature type="strand" evidence="11">
    <location>
        <begin position="75"/>
        <end position="82"/>
    </location>
</feature>
<accession>P98179</accession>
<gene>
    <name type="primary">RBM3</name>
    <name type="synonym">RNPL</name>
</gene>
<comment type="function">
    <text evidence="1">Cold-inducible mRNA binding protein that enhances global protein synthesis at both physiological and mild hypothermic temperatures. Reduces the relative abundance of microRNAs, when overexpressed. Enhances phosphorylation of translation initiation factors and active polysome formation (By similarity).</text>
</comment>
<comment type="subunit">
    <text evidence="1">Interacts with RPL4. Associates with the 60S ribosomal subunits in an RNA-independent manner. Associates with ribosomes (By similarity).</text>
</comment>
<comment type="interaction">
    <interactant intactId="EBI-2949699">
        <id>P98179</id>
    </interactant>
    <interactant intactId="EBI-11984237">
        <id>Q9Y3Y2-3</id>
        <label>CHTOP</label>
    </interactant>
    <organismsDiffer>false</organismsDiffer>
    <experiments>3</experiments>
</comment>
<comment type="interaction">
    <interactant intactId="EBI-2949699">
        <id>P98179</id>
    </interactant>
    <interactant intactId="EBI-304185">
        <id>P61978</id>
        <label>HNRNPK</label>
    </interactant>
    <organismsDiffer>false</organismsDiffer>
    <experiments>7</experiments>
</comment>
<comment type="interaction">
    <interactant intactId="EBI-2949699">
        <id>P98179</id>
    </interactant>
    <interactant intactId="EBI-7060731">
        <id>P61978-2</id>
        <label>HNRNPK</label>
    </interactant>
    <organismsDiffer>false</organismsDiffer>
    <experiments>3</experiments>
</comment>
<comment type="interaction">
    <interactant intactId="EBI-2949699">
        <id>P98179</id>
    </interactant>
    <interactant intactId="EBI-1024419">
        <id>Q9Y6M1</id>
        <label>IGF2BP2</label>
    </interactant>
    <organismsDiffer>false</organismsDiffer>
    <experiments>6</experiments>
</comment>
<comment type="interaction">
    <interactant intactId="EBI-2949699">
        <id>P98179</id>
    </interactant>
    <interactant intactId="EBI-742808">
        <id>Q5VWX1</id>
        <label>KHDRBS2</label>
    </interactant>
    <organismsDiffer>false</organismsDiffer>
    <experiments>8</experiments>
</comment>
<comment type="interaction">
    <interactant intactId="EBI-2949699">
        <id>P98179</id>
    </interactant>
    <interactant intactId="EBI-722504">
        <id>O75525</id>
        <label>KHDRBS3</label>
    </interactant>
    <organismsDiffer>false</organismsDiffer>
    <experiments>3</experiments>
</comment>
<comment type="interaction">
    <interactant intactId="EBI-2949699">
        <id>P98179</id>
    </interactant>
    <interactant intactId="EBI-2858213">
        <id>Q86VE0</id>
        <label>MYPOP</label>
    </interactant>
    <organismsDiffer>false</organismsDiffer>
    <experiments>3</experiments>
</comment>
<comment type="interaction">
    <interactant intactId="EBI-2949699">
        <id>P98179</id>
    </interactant>
    <interactant intactId="EBI-946095">
        <id>Q15365</id>
        <label>PCBP1</label>
    </interactant>
    <organismsDiffer>false</organismsDiffer>
    <experiments>3</experiments>
</comment>
<comment type="interaction">
    <interactant intactId="EBI-2949699">
        <id>P98179</id>
    </interactant>
    <interactant intactId="EBI-2803328">
        <id>P79522</id>
        <label>PRR3</label>
    </interactant>
    <organismsDiffer>false</organismsDiffer>
    <experiments>3</experiments>
</comment>
<comment type="interaction">
    <interactant intactId="EBI-2949699">
        <id>P98179</id>
    </interactant>
    <interactant intactId="EBI-743526">
        <id>P38159</id>
        <label>RBMX</label>
    </interactant>
    <organismsDiffer>false</organismsDiffer>
    <experiments>7</experiments>
</comment>
<comment type="interaction">
    <interactant intactId="EBI-2949699">
        <id>P98179</id>
    </interactant>
    <interactant intactId="EBI-8638511">
        <id>P0DJD3</id>
        <label>RBMY1A1</label>
    </interactant>
    <organismsDiffer>false</organismsDiffer>
    <experiments>4</experiments>
</comment>
<comment type="interaction">
    <interactant intactId="EBI-2949699">
        <id>P98179</id>
    </interactant>
    <interactant intactId="EBI-11994018">
        <id>P0DJD3-2</id>
        <label>RBMY1A1</label>
    </interactant>
    <organismsDiffer>false</organismsDiffer>
    <experiments>3</experiments>
</comment>
<comment type="interaction">
    <interactant intactId="EBI-2949699">
        <id>P98179</id>
    </interactant>
    <interactant intactId="EBI-8642021">
        <id>Q15415</id>
        <label>RBMY1J</label>
    </interactant>
    <organismsDiffer>false</organismsDiffer>
    <experiments>6</experiments>
</comment>
<comment type="interaction">
    <interactant intactId="EBI-2949699">
        <id>P98179</id>
    </interactant>
    <interactant intactId="EBI-11987469">
        <id>Q6ZRY4</id>
        <label>RBPMS2</label>
    </interactant>
    <organismsDiffer>false</organismsDiffer>
    <experiments>3</experiments>
</comment>
<comment type="interaction">
    <interactant intactId="EBI-2949699">
        <id>P98179</id>
    </interactant>
    <interactant intactId="EBI-607085">
        <id>P09012</id>
        <label>SNRPA</label>
    </interactant>
    <organismsDiffer>false</organismsDiffer>
    <experiments>8</experiments>
</comment>
<comment type="interaction">
    <interactant intactId="EBI-2949699">
        <id>P98179</id>
    </interactant>
    <interactant intactId="EBI-372557">
        <id>P84103</id>
        <label>SRSF3</label>
    </interactant>
    <organismsDiffer>false</organismsDiffer>
    <experiments>3</experiments>
</comment>
<comment type="interaction">
    <interactant intactId="EBI-2949699">
        <id>P98179</id>
    </interactant>
    <interactant intactId="EBI-7366338">
        <id>P68318</id>
        <label>OPG127</label>
    </interactant>
    <organismsDiffer>true</organismsDiffer>
    <experiments>2</experiments>
</comment>
<comment type="subcellular location">
    <subcellularLocation>
        <location evidence="1">Nucleus</location>
    </subcellularLocation>
    <subcellularLocation>
        <location evidence="1">Cytoplasm</location>
    </subcellularLocation>
    <subcellularLocation>
        <location evidence="1">Cell projection</location>
        <location evidence="1">Dendrite</location>
    </subcellularLocation>
    <text evidence="1">Localizes in mRNA granules in dentrites.</text>
</comment>
<comment type="induction">
    <text evidence="5">Up-regulated by hypoxia.</text>
</comment>
<comment type="PTM">
    <text>Arg-105 is dimethylated, probably to asymmetric dimethylarginine.</text>
</comment>
<comment type="PTM">
    <text evidence="1">Phosphorylated.</text>
</comment>
<dbReference type="EMBL" id="U28686">
    <property type="protein sequence ID" value="AAB17212.1"/>
    <property type="molecule type" value="mRNA"/>
</dbReference>
<dbReference type="EMBL" id="AF196969">
    <property type="status" value="NOT_ANNOTATED_CDS"/>
    <property type="molecule type" value="Genomic_DNA"/>
</dbReference>
<dbReference type="EMBL" id="BC006825">
    <property type="protein sequence ID" value="AAH06825.1"/>
    <property type="molecule type" value="mRNA"/>
</dbReference>
<dbReference type="CCDS" id="CCDS14301.1"/>
<dbReference type="PIR" id="G01859">
    <property type="entry name" value="G01859"/>
</dbReference>
<dbReference type="RefSeq" id="NP_006734.1">
    <property type="nucleotide sequence ID" value="NM_006743.5"/>
</dbReference>
<dbReference type="PDB" id="7EB1">
    <property type="method" value="NMR"/>
    <property type="chains" value="A=1-84"/>
</dbReference>
<dbReference type="PDBsum" id="7EB1"/>
<dbReference type="BMRB" id="P98179"/>
<dbReference type="SMR" id="P98179"/>
<dbReference type="BioGRID" id="111870">
    <property type="interactions" value="175"/>
</dbReference>
<dbReference type="FunCoup" id="P98179">
    <property type="interactions" value="2320"/>
</dbReference>
<dbReference type="IntAct" id="P98179">
    <property type="interactions" value="70"/>
</dbReference>
<dbReference type="MINT" id="P98179"/>
<dbReference type="STRING" id="9606.ENSP00000365950"/>
<dbReference type="ChEMBL" id="CHEMBL4295793"/>
<dbReference type="GlyGen" id="P98179">
    <property type="glycosylation" value="1 site, 1 O-linked glycan (1 site)"/>
</dbReference>
<dbReference type="iPTMnet" id="P98179"/>
<dbReference type="MetOSite" id="P98179"/>
<dbReference type="PhosphoSitePlus" id="P98179"/>
<dbReference type="BioMuta" id="RBM3"/>
<dbReference type="DMDM" id="1710620"/>
<dbReference type="jPOST" id="P98179"/>
<dbReference type="MassIVE" id="P98179"/>
<dbReference type="PaxDb" id="9606-ENSP00000365950"/>
<dbReference type="PeptideAtlas" id="P98179"/>
<dbReference type="ProteomicsDB" id="57816"/>
<dbReference type="Pumba" id="P98179"/>
<dbReference type="TopDownProteomics" id="P98179"/>
<dbReference type="Antibodypedia" id="25719">
    <property type="antibodies" value="296 antibodies from 31 providers"/>
</dbReference>
<dbReference type="DNASU" id="5935"/>
<dbReference type="Ensembl" id="ENST00000376755.1">
    <property type="protein sequence ID" value="ENSP00000365946.1"/>
    <property type="gene ID" value="ENSG00000102317.18"/>
</dbReference>
<dbReference type="Ensembl" id="ENST00000376759.8">
    <property type="protein sequence ID" value="ENSP00000365950.3"/>
    <property type="gene ID" value="ENSG00000102317.18"/>
</dbReference>
<dbReference type="GeneID" id="5935"/>
<dbReference type="KEGG" id="hsa:5935"/>
<dbReference type="MANE-Select" id="ENST00000376759.8">
    <property type="protein sequence ID" value="ENSP00000365950.3"/>
    <property type="RefSeq nucleotide sequence ID" value="NM_006743.5"/>
    <property type="RefSeq protein sequence ID" value="NP_006734.1"/>
</dbReference>
<dbReference type="UCSC" id="uc004dkf.3">
    <property type="organism name" value="human"/>
</dbReference>
<dbReference type="AGR" id="HGNC:9900"/>
<dbReference type="CTD" id="5935"/>
<dbReference type="DisGeNET" id="5935"/>
<dbReference type="GeneCards" id="RBM3"/>
<dbReference type="HGNC" id="HGNC:9900">
    <property type="gene designation" value="RBM3"/>
</dbReference>
<dbReference type="HPA" id="ENSG00000102317">
    <property type="expression patterns" value="Low tissue specificity"/>
</dbReference>
<dbReference type="MIM" id="300027">
    <property type="type" value="gene"/>
</dbReference>
<dbReference type="neXtProt" id="NX_P98179"/>
<dbReference type="OpenTargets" id="ENSG00000102317"/>
<dbReference type="PharmGKB" id="PA34265"/>
<dbReference type="VEuPathDB" id="HostDB:ENSG00000102317"/>
<dbReference type="eggNOG" id="KOG0118">
    <property type="taxonomic scope" value="Eukaryota"/>
</dbReference>
<dbReference type="GeneTree" id="ENSGT00940000153524"/>
<dbReference type="HOGENOM" id="CLU_012062_28_1_1"/>
<dbReference type="InParanoid" id="P98179"/>
<dbReference type="OMA" id="FIEMADD"/>
<dbReference type="OrthoDB" id="4207594at2759"/>
<dbReference type="PAN-GO" id="P98179">
    <property type="GO annotations" value="5 GO annotations based on evolutionary models"/>
</dbReference>
<dbReference type="PhylomeDB" id="P98179"/>
<dbReference type="TreeFam" id="TF354331"/>
<dbReference type="PathwayCommons" id="P98179"/>
<dbReference type="SignaLink" id="P98179"/>
<dbReference type="BioGRID-ORCS" id="5935">
    <property type="hits" value="12 hits in 785 CRISPR screens"/>
</dbReference>
<dbReference type="CD-CODE" id="1A18FFC4">
    <property type="entry name" value="Paraspeckle"/>
</dbReference>
<dbReference type="CD-CODE" id="6209F224">
    <property type="entry name" value="Synthetic Condensate 000281"/>
</dbReference>
<dbReference type="CD-CODE" id="91857CE7">
    <property type="entry name" value="Nucleolus"/>
</dbReference>
<dbReference type="CD-CODE" id="DEE660B4">
    <property type="entry name" value="Stress granule"/>
</dbReference>
<dbReference type="ChiTaRS" id="RBM3">
    <property type="organism name" value="human"/>
</dbReference>
<dbReference type="GeneWiki" id="RBM3"/>
<dbReference type="GenomeRNAi" id="5935"/>
<dbReference type="Pharos" id="P98179">
    <property type="development level" value="Tbio"/>
</dbReference>
<dbReference type="PRO" id="PR:P98179"/>
<dbReference type="Proteomes" id="UP000005640">
    <property type="component" value="Chromosome X"/>
</dbReference>
<dbReference type="RNAct" id="P98179">
    <property type="molecule type" value="protein"/>
</dbReference>
<dbReference type="Bgee" id="ENSG00000102317">
    <property type="expression patterns" value="Expressed in endometrium epithelium and 200 other cell types or tissues"/>
</dbReference>
<dbReference type="ExpressionAtlas" id="P98179">
    <property type="expression patterns" value="baseline and differential"/>
</dbReference>
<dbReference type="GO" id="GO:0005737">
    <property type="term" value="C:cytoplasm"/>
    <property type="evidence" value="ECO:0000250"/>
    <property type="project" value="UniProtKB"/>
</dbReference>
<dbReference type="GO" id="GO:0030425">
    <property type="term" value="C:dendrite"/>
    <property type="evidence" value="ECO:0000250"/>
    <property type="project" value="UniProtKB"/>
</dbReference>
<dbReference type="GO" id="GO:0005654">
    <property type="term" value="C:nucleoplasm"/>
    <property type="evidence" value="ECO:0000314"/>
    <property type="project" value="HPA"/>
</dbReference>
<dbReference type="GO" id="GO:0005634">
    <property type="term" value="C:nucleus"/>
    <property type="evidence" value="ECO:0000250"/>
    <property type="project" value="UniProtKB"/>
</dbReference>
<dbReference type="GO" id="GO:0005681">
    <property type="term" value="C:spliceosomal complex"/>
    <property type="evidence" value="ECO:0000318"/>
    <property type="project" value="GO_Central"/>
</dbReference>
<dbReference type="GO" id="GO:0043023">
    <property type="term" value="F:ribosomal large subunit binding"/>
    <property type="evidence" value="ECO:0000318"/>
    <property type="project" value="GO_Central"/>
</dbReference>
<dbReference type="GO" id="GO:0003723">
    <property type="term" value="F:RNA binding"/>
    <property type="evidence" value="ECO:0007005"/>
    <property type="project" value="UniProtKB"/>
</dbReference>
<dbReference type="GO" id="GO:0048026">
    <property type="term" value="P:positive regulation of mRNA splicing, via spliceosome"/>
    <property type="evidence" value="ECO:0000318"/>
    <property type="project" value="GO_Central"/>
</dbReference>
<dbReference type="GO" id="GO:0045727">
    <property type="term" value="P:positive regulation of translation"/>
    <property type="evidence" value="ECO:0000250"/>
    <property type="project" value="UniProtKB"/>
</dbReference>
<dbReference type="GO" id="GO:0006417">
    <property type="term" value="P:regulation of translation"/>
    <property type="evidence" value="ECO:0000250"/>
    <property type="project" value="UniProtKB"/>
</dbReference>
<dbReference type="GO" id="GO:0006396">
    <property type="term" value="P:RNA processing"/>
    <property type="evidence" value="ECO:0000304"/>
    <property type="project" value="ProtInc"/>
</dbReference>
<dbReference type="CDD" id="cd12449">
    <property type="entry name" value="RRM_CIRBP_RBM3"/>
    <property type="match status" value="1"/>
</dbReference>
<dbReference type="FunFam" id="3.30.70.330:FF:000312">
    <property type="entry name" value="RNA-binding protein 3 isoform X1"/>
    <property type="match status" value="1"/>
</dbReference>
<dbReference type="Gene3D" id="3.30.70.330">
    <property type="match status" value="1"/>
</dbReference>
<dbReference type="InterPro" id="IPR012677">
    <property type="entry name" value="Nucleotide-bd_a/b_plait_sf"/>
</dbReference>
<dbReference type="InterPro" id="IPR035979">
    <property type="entry name" value="RBD_domain_sf"/>
</dbReference>
<dbReference type="InterPro" id="IPR050441">
    <property type="entry name" value="RBM"/>
</dbReference>
<dbReference type="InterPro" id="IPR034278">
    <property type="entry name" value="RBM3/CIRBP_RRM"/>
</dbReference>
<dbReference type="InterPro" id="IPR000504">
    <property type="entry name" value="RRM_dom"/>
</dbReference>
<dbReference type="PANTHER" id="PTHR48034">
    <property type="entry name" value="TRANSFORMER-2 SEX-DETERMINING PROTEIN-RELATED"/>
    <property type="match status" value="1"/>
</dbReference>
<dbReference type="Pfam" id="PF00076">
    <property type="entry name" value="RRM_1"/>
    <property type="match status" value="1"/>
</dbReference>
<dbReference type="SMART" id="SM00360">
    <property type="entry name" value="RRM"/>
    <property type="match status" value="1"/>
</dbReference>
<dbReference type="SUPFAM" id="SSF54928">
    <property type="entry name" value="RNA-binding domain, RBD"/>
    <property type="match status" value="1"/>
</dbReference>
<dbReference type="PROSITE" id="PS50102">
    <property type="entry name" value="RRM"/>
    <property type="match status" value="1"/>
</dbReference>
<reference key="1">
    <citation type="journal article" date="1995" name="Hum. Mol. Genet.">
        <title>RBM3, a novel human gene in Xp11.23 with a putative RNA-binding domain.</title>
        <authorList>
            <person name="Derry J.M."/>
            <person name="Kerns J.A."/>
            <person name="Francke U."/>
        </authorList>
    </citation>
    <scope>NUCLEOTIDE SEQUENCE [MRNA]</scope>
</reference>
<reference key="2">
    <citation type="journal article" date="2005" name="Nature">
        <title>The DNA sequence of the human X chromosome.</title>
        <authorList>
            <person name="Ross M.T."/>
            <person name="Grafham D.V."/>
            <person name="Coffey A.J."/>
            <person name="Scherer S."/>
            <person name="McLay K."/>
            <person name="Muzny D."/>
            <person name="Platzer M."/>
            <person name="Howell G.R."/>
            <person name="Burrows C."/>
            <person name="Bird C.P."/>
            <person name="Frankish A."/>
            <person name="Lovell F.L."/>
            <person name="Howe K.L."/>
            <person name="Ashurst J.L."/>
            <person name="Fulton R.S."/>
            <person name="Sudbrak R."/>
            <person name="Wen G."/>
            <person name="Jones M.C."/>
            <person name="Hurles M.E."/>
            <person name="Andrews T.D."/>
            <person name="Scott C.E."/>
            <person name="Searle S."/>
            <person name="Ramser J."/>
            <person name="Whittaker A."/>
            <person name="Deadman R."/>
            <person name="Carter N.P."/>
            <person name="Hunt S.E."/>
            <person name="Chen R."/>
            <person name="Cree A."/>
            <person name="Gunaratne P."/>
            <person name="Havlak P."/>
            <person name="Hodgson A."/>
            <person name="Metzker M.L."/>
            <person name="Richards S."/>
            <person name="Scott G."/>
            <person name="Steffen D."/>
            <person name="Sodergren E."/>
            <person name="Wheeler D.A."/>
            <person name="Worley K.C."/>
            <person name="Ainscough R."/>
            <person name="Ambrose K.D."/>
            <person name="Ansari-Lari M.A."/>
            <person name="Aradhya S."/>
            <person name="Ashwell R.I."/>
            <person name="Babbage A.K."/>
            <person name="Bagguley C.L."/>
            <person name="Ballabio A."/>
            <person name="Banerjee R."/>
            <person name="Barker G.E."/>
            <person name="Barlow K.F."/>
            <person name="Barrett I.P."/>
            <person name="Bates K.N."/>
            <person name="Beare D.M."/>
            <person name="Beasley H."/>
            <person name="Beasley O."/>
            <person name="Beck A."/>
            <person name="Bethel G."/>
            <person name="Blechschmidt K."/>
            <person name="Brady N."/>
            <person name="Bray-Allen S."/>
            <person name="Bridgeman A.M."/>
            <person name="Brown A.J."/>
            <person name="Brown M.J."/>
            <person name="Bonnin D."/>
            <person name="Bruford E.A."/>
            <person name="Buhay C."/>
            <person name="Burch P."/>
            <person name="Burford D."/>
            <person name="Burgess J."/>
            <person name="Burrill W."/>
            <person name="Burton J."/>
            <person name="Bye J.M."/>
            <person name="Carder C."/>
            <person name="Carrel L."/>
            <person name="Chako J."/>
            <person name="Chapman J.C."/>
            <person name="Chavez D."/>
            <person name="Chen E."/>
            <person name="Chen G."/>
            <person name="Chen Y."/>
            <person name="Chen Z."/>
            <person name="Chinault C."/>
            <person name="Ciccodicola A."/>
            <person name="Clark S.Y."/>
            <person name="Clarke G."/>
            <person name="Clee C.M."/>
            <person name="Clegg S."/>
            <person name="Clerc-Blankenburg K."/>
            <person name="Clifford K."/>
            <person name="Cobley V."/>
            <person name="Cole C.G."/>
            <person name="Conquer J.S."/>
            <person name="Corby N."/>
            <person name="Connor R.E."/>
            <person name="David R."/>
            <person name="Davies J."/>
            <person name="Davis C."/>
            <person name="Davis J."/>
            <person name="Delgado O."/>
            <person name="Deshazo D."/>
            <person name="Dhami P."/>
            <person name="Ding Y."/>
            <person name="Dinh H."/>
            <person name="Dodsworth S."/>
            <person name="Draper H."/>
            <person name="Dugan-Rocha S."/>
            <person name="Dunham A."/>
            <person name="Dunn M."/>
            <person name="Durbin K.J."/>
            <person name="Dutta I."/>
            <person name="Eades T."/>
            <person name="Ellwood M."/>
            <person name="Emery-Cohen A."/>
            <person name="Errington H."/>
            <person name="Evans K.L."/>
            <person name="Faulkner L."/>
            <person name="Francis F."/>
            <person name="Frankland J."/>
            <person name="Fraser A.E."/>
            <person name="Galgoczy P."/>
            <person name="Gilbert J."/>
            <person name="Gill R."/>
            <person name="Gloeckner G."/>
            <person name="Gregory S.G."/>
            <person name="Gribble S."/>
            <person name="Griffiths C."/>
            <person name="Grocock R."/>
            <person name="Gu Y."/>
            <person name="Gwilliam R."/>
            <person name="Hamilton C."/>
            <person name="Hart E.A."/>
            <person name="Hawes A."/>
            <person name="Heath P.D."/>
            <person name="Heitmann K."/>
            <person name="Hennig S."/>
            <person name="Hernandez J."/>
            <person name="Hinzmann B."/>
            <person name="Ho S."/>
            <person name="Hoffs M."/>
            <person name="Howden P.J."/>
            <person name="Huckle E.J."/>
            <person name="Hume J."/>
            <person name="Hunt P.J."/>
            <person name="Hunt A.R."/>
            <person name="Isherwood J."/>
            <person name="Jacob L."/>
            <person name="Johnson D."/>
            <person name="Jones S."/>
            <person name="de Jong P.J."/>
            <person name="Joseph S.S."/>
            <person name="Keenan S."/>
            <person name="Kelly S."/>
            <person name="Kershaw J.K."/>
            <person name="Khan Z."/>
            <person name="Kioschis P."/>
            <person name="Klages S."/>
            <person name="Knights A.J."/>
            <person name="Kosiura A."/>
            <person name="Kovar-Smith C."/>
            <person name="Laird G.K."/>
            <person name="Langford C."/>
            <person name="Lawlor S."/>
            <person name="Leversha M."/>
            <person name="Lewis L."/>
            <person name="Liu W."/>
            <person name="Lloyd C."/>
            <person name="Lloyd D.M."/>
            <person name="Loulseged H."/>
            <person name="Loveland J.E."/>
            <person name="Lovell J.D."/>
            <person name="Lozado R."/>
            <person name="Lu J."/>
            <person name="Lyne R."/>
            <person name="Ma J."/>
            <person name="Maheshwari M."/>
            <person name="Matthews L.H."/>
            <person name="McDowall J."/>
            <person name="McLaren S."/>
            <person name="McMurray A."/>
            <person name="Meidl P."/>
            <person name="Meitinger T."/>
            <person name="Milne S."/>
            <person name="Miner G."/>
            <person name="Mistry S.L."/>
            <person name="Morgan M."/>
            <person name="Morris S."/>
            <person name="Mueller I."/>
            <person name="Mullikin J.C."/>
            <person name="Nguyen N."/>
            <person name="Nordsiek G."/>
            <person name="Nyakatura G."/>
            <person name="O'dell C.N."/>
            <person name="Okwuonu G."/>
            <person name="Palmer S."/>
            <person name="Pandian R."/>
            <person name="Parker D."/>
            <person name="Parrish J."/>
            <person name="Pasternak S."/>
            <person name="Patel D."/>
            <person name="Pearce A.V."/>
            <person name="Pearson D.M."/>
            <person name="Pelan S.E."/>
            <person name="Perez L."/>
            <person name="Porter K.M."/>
            <person name="Ramsey Y."/>
            <person name="Reichwald K."/>
            <person name="Rhodes S."/>
            <person name="Ridler K.A."/>
            <person name="Schlessinger D."/>
            <person name="Schueler M.G."/>
            <person name="Sehra H.K."/>
            <person name="Shaw-Smith C."/>
            <person name="Shen H."/>
            <person name="Sheridan E.M."/>
            <person name="Shownkeen R."/>
            <person name="Skuce C.D."/>
            <person name="Smith M.L."/>
            <person name="Sotheran E.C."/>
            <person name="Steingruber H.E."/>
            <person name="Steward C.A."/>
            <person name="Storey R."/>
            <person name="Swann R.M."/>
            <person name="Swarbreck D."/>
            <person name="Tabor P.E."/>
            <person name="Taudien S."/>
            <person name="Taylor T."/>
            <person name="Teague B."/>
            <person name="Thomas K."/>
            <person name="Thorpe A."/>
            <person name="Timms K."/>
            <person name="Tracey A."/>
            <person name="Trevanion S."/>
            <person name="Tromans A.C."/>
            <person name="d'Urso M."/>
            <person name="Verduzco D."/>
            <person name="Villasana D."/>
            <person name="Waldron L."/>
            <person name="Wall M."/>
            <person name="Wang Q."/>
            <person name="Warren J."/>
            <person name="Warry G.L."/>
            <person name="Wei X."/>
            <person name="West A."/>
            <person name="Whitehead S.L."/>
            <person name="Whiteley M.N."/>
            <person name="Wilkinson J.E."/>
            <person name="Willey D.L."/>
            <person name="Williams G."/>
            <person name="Williams L."/>
            <person name="Williamson A."/>
            <person name="Williamson H."/>
            <person name="Wilming L."/>
            <person name="Woodmansey R.L."/>
            <person name="Wray P.W."/>
            <person name="Yen J."/>
            <person name="Zhang J."/>
            <person name="Zhou J."/>
            <person name="Zoghbi H."/>
            <person name="Zorilla S."/>
            <person name="Buck D."/>
            <person name="Reinhardt R."/>
            <person name="Poustka A."/>
            <person name="Rosenthal A."/>
            <person name="Lehrach H."/>
            <person name="Meindl A."/>
            <person name="Minx P.J."/>
            <person name="Hillier L.W."/>
            <person name="Willard H.F."/>
            <person name="Wilson R.K."/>
            <person name="Waterston R.H."/>
            <person name="Rice C.M."/>
            <person name="Vaudin M."/>
            <person name="Coulson A."/>
            <person name="Nelson D.L."/>
            <person name="Weinstock G."/>
            <person name="Sulston J.E."/>
            <person name="Durbin R.M."/>
            <person name="Hubbard T."/>
            <person name="Gibbs R.A."/>
            <person name="Beck S."/>
            <person name="Rogers J."/>
            <person name="Bentley D.R."/>
        </authorList>
    </citation>
    <scope>NUCLEOTIDE SEQUENCE [LARGE SCALE GENOMIC DNA]</scope>
</reference>
<reference key="3">
    <citation type="journal article" date="2004" name="Genome Res.">
        <title>The status, quality, and expansion of the NIH full-length cDNA project: the Mammalian Gene Collection (MGC).</title>
        <authorList>
            <consortium name="The MGC Project Team"/>
        </authorList>
    </citation>
    <scope>NUCLEOTIDE SEQUENCE [LARGE SCALE MRNA]</scope>
    <source>
        <tissue>Placenta</tissue>
    </source>
</reference>
<reference key="4">
    <citation type="submission" date="2008-12" db="UniProtKB">
        <authorList>
            <person name="Bienvenut W.V."/>
            <person name="Lilla S."/>
            <person name="von Kriegsheim A."/>
            <person name="Lempens A."/>
            <person name="Kolch W."/>
        </authorList>
    </citation>
    <scope>PROTEIN SEQUENCE OF 48-75 AND 102-131</scope>
    <scope>METHYLATION AT ARG-105</scope>
    <scope>IDENTIFICATION BY MASS SPECTROMETRY</scope>
    <source>
        <tissue>Ovarian carcinoma</tissue>
    </source>
</reference>
<reference key="5">
    <citation type="journal article" date="2004" name="Anal. Chem.">
        <title>Robust phosphoproteomic profiling of tyrosine phosphorylation sites from human T cells using immobilized metal affinity chromatography and tandem mass spectrometry.</title>
        <authorList>
            <person name="Brill L.M."/>
            <person name="Salomon A.R."/>
            <person name="Ficarro S.B."/>
            <person name="Mukherji M."/>
            <person name="Stettler-Gill M."/>
            <person name="Peters E.C."/>
        </authorList>
    </citation>
    <scope>PHOSPHORYLATION [LARGE SCALE ANALYSIS] AT TYR-155</scope>
    <scope>IDENTIFICATION BY MASS SPECTROMETRY [LARGE SCALE ANALYSIS]</scope>
    <source>
        <tissue>Leukemic T-cell</tissue>
    </source>
</reference>
<reference key="6">
    <citation type="journal article" date="2004" name="J. Cell Sci.">
        <title>Oxygen-regulated expression of the RNA-binding proteins RBM3 and CIRP by a HIF-1-independent mechanism.</title>
        <authorList>
            <person name="Wellmann S."/>
            <person name="Buehrer C."/>
            <person name="Moderegger E."/>
            <person name="Zelmer A."/>
            <person name="Kirschner R."/>
            <person name="Koehne P."/>
            <person name="Fujita J."/>
            <person name="Seeger K."/>
        </authorList>
    </citation>
    <scope>INDUCTION BY HYPOXIA</scope>
</reference>
<reference key="7">
    <citation type="journal article" date="2008" name="Proc. Natl. Acad. Sci. U.S.A.">
        <title>A quantitative atlas of mitotic phosphorylation.</title>
        <authorList>
            <person name="Dephoure N."/>
            <person name="Zhou C."/>
            <person name="Villen J."/>
            <person name="Beausoleil S.A."/>
            <person name="Bakalarski C.E."/>
            <person name="Elledge S.J."/>
            <person name="Gygi S.P."/>
        </authorList>
    </citation>
    <scope>PHOSPHORYLATION [LARGE SCALE ANALYSIS] AT SER-147</scope>
    <scope>IDENTIFICATION BY MASS SPECTROMETRY [LARGE SCALE ANALYSIS]</scope>
    <source>
        <tissue>Cervix carcinoma</tissue>
    </source>
</reference>
<reference key="8">
    <citation type="journal article" date="2011" name="BMC Syst. Biol.">
        <title>Initial characterization of the human central proteome.</title>
        <authorList>
            <person name="Burkard T.R."/>
            <person name="Planyavsky M."/>
            <person name="Kaupe I."/>
            <person name="Breitwieser F.P."/>
            <person name="Buerckstuemmer T."/>
            <person name="Bennett K.L."/>
            <person name="Superti-Furga G."/>
            <person name="Colinge J."/>
        </authorList>
    </citation>
    <scope>IDENTIFICATION BY MASS SPECTROMETRY [LARGE SCALE ANALYSIS]</scope>
</reference>
<reference key="9">
    <citation type="journal article" date="2013" name="J. Proteome Res.">
        <title>Toward a comprehensive characterization of a human cancer cell phosphoproteome.</title>
        <authorList>
            <person name="Zhou H."/>
            <person name="Di Palma S."/>
            <person name="Preisinger C."/>
            <person name="Peng M."/>
            <person name="Polat A.N."/>
            <person name="Heck A.J."/>
            <person name="Mohammed S."/>
        </authorList>
    </citation>
    <scope>PHOSPHORYLATION [LARGE SCALE ANALYSIS] AT SER-147</scope>
    <scope>IDENTIFICATION BY MASS SPECTROMETRY [LARGE SCALE ANALYSIS]</scope>
    <source>
        <tissue>Cervix carcinoma</tissue>
        <tissue>Erythroleukemia</tissue>
    </source>
</reference>
<reference key="10">
    <citation type="journal article" date="2014" name="J. Proteomics">
        <title>An enzyme assisted RP-RPLC approach for in-depth analysis of human liver phosphoproteome.</title>
        <authorList>
            <person name="Bian Y."/>
            <person name="Song C."/>
            <person name="Cheng K."/>
            <person name="Dong M."/>
            <person name="Wang F."/>
            <person name="Huang J."/>
            <person name="Sun D."/>
            <person name="Wang L."/>
            <person name="Ye M."/>
            <person name="Zou H."/>
        </authorList>
    </citation>
    <scope>IDENTIFICATION BY MASS SPECTROMETRY [LARGE SCALE ANALYSIS]</scope>
    <source>
        <tissue>Liver</tissue>
    </source>
</reference>
<reference key="11">
    <citation type="journal article" date="2014" name="Mol. Cell. Proteomics">
        <title>Immunoaffinity enrichment and mass spectrometry analysis of protein methylation.</title>
        <authorList>
            <person name="Guo A."/>
            <person name="Gu H."/>
            <person name="Zhou J."/>
            <person name="Mulhern D."/>
            <person name="Wang Y."/>
            <person name="Lee K.A."/>
            <person name="Yang V."/>
            <person name="Aguiar M."/>
            <person name="Kornhauser J."/>
            <person name="Jia X."/>
            <person name="Ren J."/>
            <person name="Beausoleil S.A."/>
            <person name="Silva J.C."/>
            <person name="Vemulapalli V."/>
            <person name="Bedford M.T."/>
            <person name="Comb M.J."/>
        </authorList>
    </citation>
    <scope>METHYLATION [LARGE SCALE ANALYSIS] AT ARG-47; ARG-105; ARG-121 AND ARG-131</scope>
    <scope>IDENTIFICATION BY MASS SPECTROMETRY [LARGE SCALE ANALYSIS]</scope>
    <source>
        <tissue>Colon carcinoma</tissue>
    </source>
</reference>
<keyword id="KW-0002">3D-structure</keyword>
<keyword id="KW-0966">Cell projection</keyword>
<keyword id="KW-0963">Cytoplasm</keyword>
<keyword id="KW-0903">Direct protein sequencing</keyword>
<keyword id="KW-0488">Methylation</keyword>
<keyword id="KW-0539">Nucleus</keyword>
<keyword id="KW-0597">Phosphoprotein</keyword>
<keyword id="KW-1267">Proteomics identification</keyword>
<keyword id="KW-1185">Reference proteome</keyword>
<keyword id="KW-0694">RNA-binding</keyword>
<keyword id="KW-0346">Stress response</keyword>
<proteinExistence type="evidence at protein level"/>
<organism>
    <name type="scientific">Homo sapiens</name>
    <name type="common">Human</name>
    <dbReference type="NCBI Taxonomy" id="9606"/>
    <lineage>
        <taxon>Eukaryota</taxon>
        <taxon>Metazoa</taxon>
        <taxon>Chordata</taxon>
        <taxon>Craniata</taxon>
        <taxon>Vertebrata</taxon>
        <taxon>Euteleostomi</taxon>
        <taxon>Mammalia</taxon>
        <taxon>Eutheria</taxon>
        <taxon>Euarchontoglires</taxon>
        <taxon>Primates</taxon>
        <taxon>Haplorrhini</taxon>
        <taxon>Catarrhini</taxon>
        <taxon>Hominidae</taxon>
        <taxon>Homo</taxon>
    </lineage>
</organism>
<evidence type="ECO:0000250" key="1"/>
<evidence type="ECO:0000250" key="2">
    <source>
        <dbReference type="UniProtKB" id="O89086"/>
    </source>
</evidence>
<evidence type="ECO:0000255" key="3">
    <source>
        <dbReference type="PROSITE-ProRule" id="PRU00176"/>
    </source>
</evidence>
<evidence type="ECO:0000256" key="4">
    <source>
        <dbReference type="SAM" id="MobiDB-lite"/>
    </source>
</evidence>
<evidence type="ECO:0000269" key="5">
    <source>
    </source>
</evidence>
<evidence type="ECO:0000269" key="6">
    <source ref="4"/>
</evidence>
<evidence type="ECO:0007744" key="7">
    <source>
    </source>
</evidence>
<evidence type="ECO:0007744" key="8">
    <source>
    </source>
</evidence>
<evidence type="ECO:0007744" key="9">
    <source>
    </source>
</evidence>
<evidence type="ECO:0007744" key="10">
    <source>
    </source>
</evidence>
<evidence type="ECO:0007829" key="11">
    <source>
        <dbReference type="PDB" id="7EB1"/>
    </source>
</evidence>
<sequence length="157" mass="17170">MSSEEGKLFVGGLNFNTDEQALEDHFSSFGPISEVVVVKDRETQRSRGFGFITFTNPEHASVAMRAMNGESLDGRQIRVDHAGKSARGTRGGGFGAHGRGRSYSRGGGDQGYGSGRYYDSRPGGYGYGYGRSRDYNGRNQGGYDRYSGGNYRDNYDN</sequence>
<name>RBM3_HUMAN</name>